<organism>
    <name type="scientific">Photorhabdus laumondii subsp. laumondii (strain DSM 15139 / CIP 105565 / TT01)</name>
    <name type="common">Photorhabdus luminescens subsp. laumondii</name>
    <dbReference type="NCBI Taxonomy" id="243265"/>
    <lineage>
        <taxon>Bacteria</taxon>
        <taxon>Pseudomonadati</taxon>
        <taxon>Pseudomonadota</taxon>
        <taxon>Gammaproteobacteria</taxon>
        <taxon>Enterobacterales</taxon>
        <taxon>Morganellaceae</taxon>
        <taxon>Photorhabdus</taxon>
    </lineage>
</organism>
<evidence type="ECO:0000255" key="1">
    <source>
        <dbReference type="HAMAP-Rule" id="MF_00708"/>
    </source>
</evidence>
<name>FRDC_PHOLL</name>
<dbReference type="EMBL" id="BX571872">
    <property type="protein sequence ID" value="CAE16498.1"/>
    <property type="molecule type" value="Genomic_DNA"/>
</dbReference>
<dbReference type="RefSeq" id="WP_011148243.1">
    <property type="nucleotide sequence ID" value="NC_005126.1"/>
</dbReference>
<dbReference type="SMR" id="Q7MZY2"/>
<dbReference type="STRING" id="243265.plu4126"/>
<dbReference type="GeneID" id="48850343"/>
<dbReference type="KEGG" id="plu:plu4126"/>
<dbReference type="eggNOG" id="COG3029">
    <property type="taxonomic scope" value="Bacteria"/>
</dbReference>
<dbReference type="HOGENOM" id="CLU_156492_0_0_6"/>
<dbReference type="OrthoDB" id="8909678at2"/>
<dbReference type="Proteomes" id="UP000002514">
    <property type="component" value="Chromosome"/>
</dbReference>
<dbReference type="GO" id="GO:0045283">
    <property type="term" value="C:fumarate reductase complex"/>
    <property type="evidence" value="ECO:0007669"/>
    <property type="project" value="UniProtKB-UniRule"/>
</dbReference>
<dbReference type="GO" id="GO:0005886">
    <property type="term" value="C:plasma membrane"/>
    <property type="evidence" value="ECO:0007669"/>
    <property type="project" value="UniProtKB-SubCell"/>
</dbReference>
<dbReference type="GO" id="GO:0000104">
    <property type="term" value="F:succinate dehydrogenase activity"/>
    <property type="evidence" value="ECO:0007669"/>
    <property type="project" value="UniProtKB-UniRule"/>
</dbReference>
<dbReference type="CDD" id="cd00546">
    <property type="entry name" value="QFR_TypeD_subunitC"/>
    <property type="match status" value="1"/>
</dbReference>
<dbReference type="Gene3D" id="1.20.1300.10">
    <property type="entry name" value="Fumarate reductase/succinate dehydrogenase, transmembrane subunit"/>
    <property type="match status" value="1"/>
</dbReference>
<dbReference type="HAMAP" id="MF_00708">
    <property type="entry name" value="Fumarate_red_C"/>
    <property type="match status" value="1"/>
</dbReference>
<dbReference type="InterPro" id="IPR003510">
    <property type="entry name" value="Fumarate_red_C"/>
</dbReference>
<dbReference type="InterPro" id="IPR034804">
    <property type="entry name" value="SQR/QFR_C/D"/>
</dbReference>
<dbReference type="NCBIfam" id="NF003445">
    <property type="entry name" value="PRK04987.1"/>
    <property type="match status" value="1"/>
</dbReference>
<dbReference type="Pfam" id="PF02300">
    <property type="entry name" value="Fumarate_red_C"/>
    <property type="match status" value="1"/>
</dbReference>
<dbReference type="PIRSF" id="PIRSF000180">
    <property type="entry name" value="FrdC"/>
    <property type="match status" value="1"/>
</dbReference>
<dbReference type="SUPFAM" id="SSF81343">
    <property type="entry name" value="Fumarate reductase respiratory complex transmembrane subunits"/>
    <property type="match status" value="1"/>
</dbReference>
<keyword id="KW-0997">Cell inner membrane</keyword>
<keyword id="KW-1003">Cell membrane</keyword>
<keyword id="KW-0472">Membrane</keyword>
<keyword id="KW-1185">Reference proteome</keyword>
<keyword id="KW-0812">Transmembrane</keyword>
<keyword id="KW-1133">Transmembrane helix</keyword>
<comment type="function">
    <text evidence="1">Two distinct, membrane-bound, FAD-containing enzymes are responsible for the catalysis of fumarate and succinate interconversion; fumarate reductase is used in anaerobic growth, and succinate dehydrogenase is used in aerobic growth. Anchors the catalytic components of the fumarate reductase complex to the cell inner membrane, binds quinones.</text>
</comment>
<comment type="subunit">
    <text evidence="1">Part of an enzyme complex containing four subunits: a flavoprotein (FrdA), an iron-sulfur protein (FrdB), and two hydrophobic anchor proteins (FrdC and FrdD).</text>
</comment>
<comment type="subcellular location">
    <subcellularLocation>
        <location evidence="1">Cell inner membrane</location>
        <topology evidence="1">Multi-pass membrane protein</topology>
    </subcellularLocation>
</comment>
<comment type="similarity">
    <text evidence="1">Belongs to the FrdC family.</text>
</comment>
<accession>Q7MZY2</accession>
<feature type="chain" id="PRO_1000045528" description="Fumarate reductase subunit C">
    <location>
        <begin position="1"/>
        <end position="130"/>
    </location>
</feature>
<feature type="transmembrane region" description="Helical" evidence="1">
    <location>
        <begin position="33"/>
        <end position="53"/>
    </location>
</feature>
<feature type="transmembrane region" description="Helical" evidence="1">
    <location>
        <begin position="60"/>
        <end position="80"/>
    </location>
</feature>
<feature type="transmembrane region" description="Helical" evidence="1">
    <location>
        <begin position="109"/>
        <end position="129"/>
    </location>
</feature>
<reference key="1">
    <citation type="journal article" date="2003" name="Nat. Biotechnol.">
        <title>The genome sequence of the entomopathogenic bacterium Photorhabdus luminescens.</title>
        <authorList>
            <person name="Duchaud E."/>
            <person name="Rusniok C."/>
            <person name="Frangeul L."/>
            <person name="Buchrieser C."/>
            <person name="Givaudan A."/>
            <person name="Taourit S."/>
            <person name="Bocs S."/>
            <person name="Boursaux-Eude C."/>
            <person name="Chandler M."/>
            <person name="Charles J.-F."/>
            <person name="Dassa E."/>
            <person name="Derose R."/>
            <person name="Derzelle S."/>
            <person name="Freyssinet G."/>
            <person name="Gaudriault S."/>
            <person name="Medigue C."/>
            <person name="Lanois A."/>
            <person name="Powell K."/>
            <person name="Siguier P."/>
            <person name="Vincent R."/>
            <person name="Wingate V."/>
            <person name="Zouine M."/>
            <person name="Glaser P."/>
            <person name="Boemare N."/>
            <person name="Danchin A."/>
            <person name="Kunst F."/>
        </authorList>
    </citation>
    <scope>NUCLEOTIDE SEQUENCE [LARGE SCALE GENOMIC DNA]</scope>
    <source>
        <strain>DSM 15139 / CIP 105565 / TT01</strain>
    </source>
</reference>
<proteinExistence type="inferred from homology"/>
<protein>
    <recommendedName>
        <fullName evidence="1">Fumarate reductase subunit C</fullName>
    </recommendedName>
    <alternativeName>
        <fullName evidence="1">Fumarate reductase 15 kDa hydrophobic protein</fullName>
    </alternativeName>
    <alternativeName>
        <fullName evidence="1">Quinol-fumarate reductase subunit C</fullName>
        <shortName evidence="1">QFR subunit C</shortName>
    </alternativeName>
</protein>
<sequence length="130" mass="14812">MTTKRKPYIRSMAPNWWQKLGFYRFYILRESTAVTTMWFSILLIYGLFALKGGTQSWHEFVTFLQNPVILLVNIITLLGALLHTKTWFELAPKAANIVIKGEKMGSGPVIKLLWAVTIIVTMIILGIALL</sequence>
<gene>
    <name evidence="1" type="primary">frdC</name>
    <name type="ordered locus">plu4126</name>
</gene>